<comment type="similarity">
    <text evidence="1">Belongs to the small heat shock protein (HSP20) family.</text>
</comment>
<name>HSP20_NIPBR</name>
<feature type="chain" id="PRO_0000125962" description="Heat shock protein homolog">
    <location>
        <begin position="1"/>
        <end position="172"/>
    </location>
</feature>
<feature type="domain" description="sHSP" evidence="1">
    <location>
        <begin position="47"/>
        <end position="153"/>
    </location>
</feature>
<feature type="region of interest" description="Disordered" evidence="2">
    <location>
        <begin position="135"/>
        <end position="172"/>
    </location>
</feature>
<protein>
    <recommendedName>
        <fullName>Heat shock protein homolog</fullName>
    </recommendedName>
    <alternativeName>
        <fullName>HSP20</fullName>
    </alternativeName>
</protein>
<proteinExistence type="evidence at transcript level"/>
<dbReference type="EMBL" id="X71663">
    <property type="protein sequence ID" value="CAA50655.1"/>
    <property type="molecule type" value="mRNA"/>
</dbReference>
<dbReference type="PIR" id="S33416">
    <property type="entry name" value="S33416"/>
</dbReference>
<dbReference type="SMR" id="Q07160"/>
<dbReference type="GO" id="GO:0005737">
    <property type="term" value="C:cytoplasm"/>
    <property type="evidence" value="ECO:0007669"/>
    <property type="project" value="TreeGrafter"/>
</dbReference>
<dbReference type="GO" id="GO:0005634">
    <property type="term" value="C:nucleus"/>
    <property type="evidence" value="ECO:0007669"/>
    <property type="project" value="TreeGrafter"/>
</dbReference>
<dbReference type="GO" id="GO:0051082">
    <property type="term" value="F:unfolded protein binding"/>
    <property type="evidence" value="ECO:0007669"/>
    <property type="project" value="TreeGrafter"/>
</dbReference>
<dbReference type="GO" id="GO:0036498">
    <property type="term" value="P:IRE1-mediated unfolded protein response"/>
    <property type="evidence" value="ECO:0007669"/>
    <property type="project" value="TreeGrafter"/>
</dbReference>
<dbReference type="GO" id="GO:0042026">
    <property type="term" value="P:protein refolding"/>
    <property type="evidence" value="ECO:0007669"/>
    <property type="project" value="TreeGrafter"/>
</dbReference>
<dbReference type="GO" id="GO:0009408">
    <property type="term" value="P:response to heat"/>
    <property type="evidence" value="ECO:0007669"/>
    <property type="project" value="TreeGrafter"/>
</dbReference>
<dbReference type="CDD" id="cd06526">
    <property type="entry name" value="metazoan_ACD"/>
    <property type="match status" value="1"/>
</dbReference>
<dbReference type="Gene3D" id="2.60.40.790">
    <property type="match status" value="1"/>
</dbReference>
<dbReference type="InterPro" id="IPR002068">
    <property type="entry name" value="A-crystallin/Hsp20_dom"/>
</dbReference>
<dbReference type="InterPro" id="IPR001436">
    <property type="entry name" value="Alpha-crystallin/sHSP_animal"/>
</dbReference>
<dbReference type="InterPro" id="IPR008978">
    <property type="entry name" value="HSP20-like_chaperone"/>
</dbReference>
<dbReference type="PANTHER" id="PTHR45640">
    <property type="entry name" value="HEAT SHOCK PROTEIN HSP-12.2-RELATED"/>
    <property type="match status" value="1"/>
</dbReference>
<dbReference type="PANTHER" id="PTHR45640:SF1">
    <property type="entry name" value="HEAT SHOCK PROTEIN HSP-16.1_HSP-16.11-RELATED"/>
    <property type="match status" value="1"/>
</dbReference>
<dbReference type="Pfam" id="PF00011">
    <property type="entry name" value="HSP20"/>
    <property type="match status" value="1"/>
</dbReference>
<dbReference type="PRINTS" id="PR00299">
    <property type="entry name" value="ACRYSTALLIN"/>
</dbReference>
<dbReference type="SUPFAM" id="SSF49764">
    <property type="entry name" value="HSP20-like chaperones"/>
    <property type="match status" value="1"/>
</dbReference>
<dbReference type="PROSITE" id="PS01031">
    <property type="entry name" value="SHSP"/>
    <property type="match status" value="1"/>
</dbReference>
<reference key="1">
    <citation type="journal article" date="1993" name="Mol. Biochem. Parasitol.">
        <title>The expression of a small heat shock protein homologue is developmentally regulated in Nippostrongylus brasiliensis.</title>
        <authorList>
            <person name="Tweedie S."/>
            <person name="Grigg M.E."/>
            <person name="Ingram L."/>
            <person name="Selkirk M.E."/>
        </authorList>
    </citation>
    <scope>NUCLEOTIDE SEQUENCE [MRNA]</scope>
</reference>
<sequence length="172" mass="20227">MALWPVDRFERMMMEDPMRAMDRFGRMGDMDHWMSRRMMPYWRDADHSMLHVGNQKEVINDDKKFAVSLDVKHFKPNELKVQLDDRDLTVEGMQEVKTEHGYIKKQFVHRWSLPEDCDLDAVHTELDNHGHLSIEAPEDGPSQKFQSSAHSSSAEEEEVGDIEPVNKRILYK</sequence>
<gene>
    <name type="primary">HSP20</name>
</gene>
<evidence type="ECO:0000255" key="1">
    <source>
        <dbReference type="PROSITE-ProRule" id="PRU00285"/>
    </source>
</evidence>
<evidence type="ECO:0000256" key="2">
    <source>
        <dbReference type="SAM" id="MobiDB-lite"/>
    </source>
</evidence>
<accession>Q07160</accession>
<keyword id="KW-0346">Stress response</keyword>
<organism>
    <name type="scientific">Nippostrongylus brasiliensis</name>
    <name type="common">Rat hookworm</name>
    <dbReference type="NCBI Taxonomy" id="27835"/>
    <lineage>
        <taxon>Eukaryota</taxon>
        <taxon>Metazoa</taxon>
        <taxon>Ecdysozoa</taxon>
        <taxon>Nematoda</taxon>
        <taxon>Chromadorea</taxon>
        <taxon>Rhabditida</taxon>
        <taxon>Rhabditina</taxon>
        <taxon>Rhabditomorpha</taxon>
        <taxon>Strongyloidea</taxon>
        <taxon>Heligmosomidae</taxon>
        <taxon>Nippostrongylus</taxon>
    </lineage>
</organism>